<name>RL25_POLAQ</name>
<evidence type="ECO:0000255" key="1">
    <source>
        <dbReference type="HAMAP-Rule" id="MF_01334"/>
    </source>
</evidence>
<evidence type="ECO:0000256" key="2">
    <source>
        <dbReference type="SAM" id="MobiDB-lite"/>
    </source>
</evidence>
<evidence type="ECO:0000305" key="3"/>
<protein>
    <recommendedName>
        <fullName evidence="1">Large ribosomal subunit protein bL25</fullName>
    </recommendedName>
    <alternativeName>
        <fullName evidence="3">50S ribosomal protein L25</fullName>
    </alternativeName>
    <alternativeName>
        <fullName evidence="1">General stress protein CTC</fullName>
    </alternativeName>
</protein>
<proteinExistence type="inferred from homology"/>
<dbReference type="EMBL" id="CP000655">
    <property type="protein sequence ID" value="ABP35133.1"/>
    <property type="molecule type" value="Genomic_DNA"/>
</dbReference>
<dbReference type="RefSeq" id="WP_011903756.1">
    <property type="nucleotide sequence ID" value="NC_009379.1"/>
</dbReference>
<dbReference type="SMR" id="A4T069"/>
<dbReference type="GeneID" id="31482312"/>
<dbReference type="KEGG" id="pnu:Pnuc_1921"/>
<dbReference type="eggNOG" id="COG1825">
    <property type="taxonomic scope" value="Bacteria"/>
</dbReference>
<dbReference type="HOGENOM" id="CLU_075939_0_1_4"/>
<dbReference type="Proteomes" id="UP000000231">
    <property type="component" value="Chromosome"/>
</dbReference>
<dbReference type="GO" id="GO:0022625">
    <property type="term" value="C:cytosolic large ribosomal subunit"/>
    <property type="evidence" value="ECO:0007669"/>
    <property type="project" value="TreeGrafter"/>
</dbReference>
<dbReference type="GO" id="GO:0008097">
    <property type="term" value="F:5S rRNA binding"/>
    <property type="evidence" value="ECO:0007669"/>
    <property type="project" value="InterPro"/>
</dbReference>
<dbReference type="GO" id="GO:0003735">
    <property type="term" value="F:structural constituent of ribosome"/>
    <property type="evidence" value="ECO:0007669"/>
    <property type="project" value="InterPro"/>
</dbReference>
<dbReference type="GO" id="GO:0006412">
    <property type="term" value="P:translation"/>
    <property type="evidence" value="ECO:0007669"/>
    <property type="project" value="UniProtKB-UniRule"/>
</dbReference>
<dbReference type="CDD" id="cd00495">
    <property type="entry name" value="Ribosomal_L25_TL5_CTC"/>
    <property type="match status" value="1"/>
</dbReference>
<dbReference type="Gene3D" id="2.170.120.20">
    <property type="entry name" value="Ribosomal protein L25, beta domain"/>
    <property type="match status" value="1"/>
</dbReference>
<dbReference type="Gene3D" id="2.40.240.10">
    <property type="entry name" value="Ribosomal Protein L25, Chain P"/>
    <property type="match status" value="1"/>
</dbReference>
<dbReference type="HAMAP" id="MF_01336">
    <property type="entry name" value="Ribosomal_bL25"/>
    <property type="match status" value="1"/>
</dbReference>
<dbReference type="HAMAP" id="MF_01334">
    <property type="entry name" value="Ribosomal_bL25_CTC"/>
    <property type="match status" value="1"/>
</dbReference>
<dbReference type="InterPro" id="IPR020056">
    <property type="entry name" value="Rbsml_bL25/Gln-tRNA_synth_N"/>
</dbReference>
<dbReference type="InterPro" id="IPR011035">
    <property type="entry name" value="Ribosomal_bL25/Gln-tRNA_synth"/>
</dbReference>
<dbReference type="InterPro" id="IPR020057">
    <property type="entry name" value="Ribosomal_bL25_b-dom"/>
</dbReference>
<dbReference type="InterPro" id="IPR037121">
    <property type="entry name" value="Ribosomal_bL25_C"/>
</dbReference>
<dbReference type="InterPro" id="IPR001021">
    <property type="entry name" value="Ribosomal_bL25_long"/>
</dbReference>
<dbReference type="InterPro" id="IPR020055">
    <property type="entry name" value="Ribosomal_bL25_short"/>
</dbReference>
<dbReference type="InterPro" id="IPR029751">
    <property type="entry name" value="Ribosomal_L25_dom"/>
</dbReference>
<dbReference type="InterPro" id="IPR020930">
    <property type="entry name" value="Ribosomal_uL5_bac-type"/>
</dbReference>
<dbReference type="NCBIfam" id="TIGR00731">
    <property type="entry name" value="bL25_bact_ctc"/>
    <property type="match status" value="1"/>
</dbReference>
<dbReference type="NCBIfam" id="NF004128">
    <property type="entry name" value="PRK05618.1-2"/>
    <property type="match status" value="1"/>
</dbReference>
<dbReference type="NCBIfam" id="NF004130">
    <property type="entry name" value="PRK05618.1-5"/>
    <property type="match status" value="1"/>
</dbReference>
<dbReference type="NCBIfam" id="NF004612">
    <property type="entry name" value="PRK05943.1"/>
    <property type="match status" value="1"/>
</dbReference>
<dbReference type="PANTHER" id="PTHR33284">
    <property type="entry name" value="RIBOSOMAL PROTEIN L25/GLN-TRNA SYNTHETASE, ANTI-CODON-BINDING DOMAIN-CONTAINING PROTEIN"/>
    <property type="match status" value="1"/>
</dbReference>
<dbReference type="PANTHER" id="PTHR33284:SF1">
    <property type="entry name" value="RIBOSOMAL PROTEIN L25_GLN-TRNA SYNTHETASE, ANTI-CODON-BINDING DOMAIN-CONTAINING PROTEIN"/>
    <property type="match status" value="1"/>
</dbReference>
<dbReference type="Pfam" id="PF01386">
    <property type="entry name" value="Ribosomal_L25p"/>
    <property type="match status" value="1"/>
</dbReference>
<dbReference type="Pfam" id="PF14693">
    <property type="entry name" value="Ribosomal_TL5_C"/>
    <property type="match status" value="1"/>
</dbReference>
<dbReference type="SUPFAM" id="SSF50715">
    <property type="entry name" value="Ribosomal protein L25-like"/>
    <property type="match status" value="1"/>
</dbReference>
<sequence>MKVVAFERSVQGTGASRRLRNSGKTPGIVYGSKDPALVIELDHNALFHALRKEAFHSSILDLEIDGKAQKVLLRDYQMHPFKPLVLHIDFQRVSASEKVHMRVPLHFTNADTSAAVKLQGAVISHILTELEVSCLPADLPEFVEVDLAKIEVGHGIHAKDIALPKGVTLVLHVEQENPVLANARIPAVKAAEPTDAPTAPAAAPGAEAPKDKA</sequence>
<comment type="function">
    <text evidence="1">This is one of the proteins that binds to the 5S RNA in the ribosome where it forms part of the central protuberance.</text>
</comment>
<comment type="subunit">
    <text evidence="1">Part of the 50S ribosomal subunit; part of the 5S rRNA/L5/L18/L25 subcomplex. Contacts the 5S rRNA. Binds to the 5S rRNA independently of L5 and L18.</text>
</comment>
<comment type="similarity">
    <text evidence="1">Belongs to the bacterial ribosomal protein bL25 family. CTC subfamily.</text>
</comment>
<feature type="chain" id="PRO_1000086633" description="Large ribosomal subunit protein bL25">
    <location>
        <begin position="1"/>
        <end position="213"/>
    </location>
</feature>
<feature type="region of interest" description="Disordered" evidence="2">
    <location>
        <begin position="191"/>
        <end position="213"/>
    </location>
</feature>
<feature type="compositionally biased region" description="Low complexity" evidence="2">
    <location>
        <begin position="191"/>
        <end position="207"/>
    </location>
</feature>
<organism>
    <name type="scientific">Polynucleobacter asymbioticus (strain DSM 18221 / CIP 109841 / QLW-P1DMWA-1)</name>
    <name type="common">Polynucleobacter necessarius subsp. asymbioticus</name>
    <dbReference type="NCBI Taxonomy" id="312153"/>
    <lineage>
        <taxon>Bacteria</taxon>
        <taxon>Pseudomonadati</taxon>
        <taxon>Pseudomonadota</taxon>
        <taxon>Betaproteobacteria</taxon>
        <taxon>Burkholderiales</taxon>
        <taxon>Burkholderiaceae</taxon>
        <taxon>Polynucleobacter</taxon>
    </lineage>
</organism>
<keyword id="KW-1185">Reference proteome</keyword>
<keyword id="KW-0687">Ribonucleoprotein</keyword>
<keyword id="KW-0689">Ribosomal protein</keyword>
<keyword id="KW-0694">RNA-binding</keyword>
<keyword id="KW-0699">rRNA-binding</keyword>
<reference key="1">
    <citation type="journal article" date="2012" name="Stand. Genomic Sci.">
        <title>Complete genome sequence of Polynucleobacter necessarius subsp. asymbioticus type strain (QLW-P1DMWA-1(T)).</title>
        <authorList>
            <person name="Meincke L."/>
            <person name="Copeland A."/>
            <person name="Lapidus A."/>
            <person name="Lucas S."/>
            <person name="Berry K.W."/>
            <person name="Del Rio T.G."/>
            <person name="Hammon N."/>
            <person name="Dalin E."/>
            <person name="Tice H."/>
            <person name="Pitluck S."/>
            <person name="Richardson P."/>
            <person name="Bruce D."/>
            <person name="Goodwin L."/>
            <person name="Han C."/>
            <person name="Tapia R."/>
            <person name="Detter J.C."/>
            <person name="Schmutz J."/>
            <person name="Brettin T."/>
            <person name="Larimer F."/>
            <person name="Land M."/>
            <person name="Hauser L."/>
            <person name="Kyrpides N.C."/>
            <person name="Ivanova N."/>
            <person name="Goker M."/>
            <person name="Woyke T."/>
            <person name="Wu Q.L."/>
            <person name="Pockl M."/>
            <person name="Hahn M.W."/>
            <person name="Klenk H.P."/>
        </authorList>
    </citation>
    <scope>NUCLEOTIDE SEQUENCE [LARGE SCALE GENOMIC DNA]</scope>
    <source>
        <strain>DSM 18221 / CIP 109841 / QLW-P1DMWA-1</strain>
    </source>
</reference>
<accession>A4T069</accession>
<gene>
    <name evidence="1" type="primary">rplY</name>
    <name evidence="1" type="synonym">ctc</name>
    <name type="ordered locus">Pnuc_1921</name>
</gene>